<proteinExistence type="evidence at protein level"/>
<comment type="function">
    <text evidence="5 7 8">Component of the BLOC-1 complex, a complex that is required for normal biogenesis of lysosome-related organelles (LRO), such as platelet dense granules and melanosomes. In concert with the AP-3 complex, the BLOC-1 complex is required to target membrane protein cargos into vesicles assembled at cell bodies for delivery into neurites and nerve terminals. The BLOC-1 complex, in association with SNARE proteins, is also proposed to be involved in neurite extension. Plays a role in intracellular vesicle trafficking.</text>
</comment>
<comment type="subunit">
    <text evidence="1 3 4 6">Octamer composed of one copy each BLOC1S1, BLOC1S2, BLOC1S3, BLOC1S4, BLOC1S5, BLOC1S6, DTNBP1/BLOC1S7 and SNAPIN/BLOC1S8. Interacts directly with BLOC1S2 (By similarity). Component of the biogenesis of lysosome-related organelles complex 1 (BLOC-1) composed of BLOC1S1, BLOC1S2, BLOC1S3, BLOC1S4, BLOC1S5, BLOC1S6, DTNBP1/BLOC1S7 and SNAPIN/BLOC1S8. The BLOC-1 complex associates with the AP-3 protein complex and membrane protein cargos. Interacts with BLOC1S4, BLOC1S5 and BLOC1S6.</text>
</comment>
<comment type="subcellular location">
    <subcellularLocation>
        <location evidence="4">Cytoplasm</location>
    </subcellularLocation>
</comment>
<comment type="tissue specificity">
    <text evidence="4">Ubiquitously expressed.</text>
</comment>
<comment type="PTM">
    <text evidence="4">Phosphorylated.</text>
</comment>
<comment type="disease">
    <text evidence="4">Defects in Bloc1s3 are the cause of the reduced pigmentation (rp) mutation phenotype, a mouse model for human Hermansky-Pudlak syndrome (HPS). Rp mice are characterized by abnormal melanosomes and display altered expression levels of the proteins of the BLOC-1 complex.</text>
</comment>
<comment type="similarity">
    <text evidence="9">Belongs to the BLOC1S3 family.</text>
</comment>
<accession>Q5U5M8</accession>
<accession>Q8C6R4</accession>
<accession>Q8R0Z3</accession>
<reference key="1">
    <citation type="journal article" date="2004" name="Blood">
        <title>Reduced pigmentation (rp), a mouse model of Hermansky-Pudlak syndrome, encodes a novel component of the BLOC-1 complex.</title>
        <authorList>
            <person name="Gwynn B."/>
            <person name="Martina J.A."/>
            <person name="Bonifacino J.S."/>
            <person name="Sviderskaya E.V."/>
            <person name="Lamoreux M.L."/>
            <person name="Bennett D.C."/>
            <person name="Moriyama K."/>
            <person name="Huizing M."/>
            <person name="Helip-Wooley A."/>
            <person name="Gahl W.A."/>
            <person name="Webb L.S."/>
            <person name="Lambert A.J."/>
            <person name="Peters L.L."/>
        </authorList>
    </citation>
    <scope>NUCLEOTIDE SEQUENCE [GENOMIC DNA / MRNA]</scope>
    <scope>INVOLVEMENT IN RP</scope>
    <scope>TISSUE SPECIFICITY</scope>
    <scope>SUBCELLULAR LOCATION</scope>
    <scope>PHOSPHORYLATION</scope>
    <scope>INTERACTION WITH BLOC1S4; BLOC1S5 AND BLOC1S6</scope>
</reference>
<reference key="2">
    <citation type="journal article" date="2005" name="Science">
        <title>The transcriptional landscape of the mammalian genome.</title>
        <authorList>
            <person name="Carninci P."/>
            <person name="Kasukawa T."/>
            <person name="Katayama S."/>
            <person name="Gough J."/>
            <person name="Frith M.C."/>
            <person name="Maeda N."/>
            <person name="Oyama R."/>
            <person name="Ravasi T."/>
            <person name="Lenhard B."/>
            <person name="Wells C."/>
            <person name="Kodzius R."/>
            <person name="Shimokawa K."/>
            <person name="Bajic V.B."/>
            <person name="Brenner S.E."/>
            <person name="Batalov S."/>
            <person name="Forrest A.R."/>
            <person name="Zavolan M."/>
            <person name="Davis M.J."/>
            <person name="Wilming L.G."/>
            <person name="Aidinis V."/>
            <person name="Allen J.E."/>
            <person name="Ambesi-Impiombato A."/>
            <person name="Apweiler R."/>
            <person name="Aturaliya R.N."/>
            <person name="Bailey T.L."/>
            <person name="Bansal M."/>
            <person name="Baxter L."/>
            <person name="Beisel K.W."/>
            <person name="Bersano T."/>
            <person name="Bono H."/>
            <person name="Chalk A.M."/>
            <person name="Chiu K.P."/>
            <person name="Choudhary V."/>
            <person name="Christoffels A."/>
            <person name="Clutterbuck D.R."/>
            <person name="Crowe M.L."/>
            <person name="Dalla E."/>
            <person name="Dalrymple B.P."/>
            <person name="de Bono B."/>
            <person name="Della Gatta G."/>
            <person name="di Bernardo D."/>
            <person name="Down T."/>
            <person name="Engstrom P."/>
            <person name="Fagiolini M."/>
            <person name="Faulkner G."/>
            <person name="Fletcher C.F."/>
            <person name="Fukushima T."/>
            <person name="Furuno M."/>
            <person name="Futaki S."/>
            <person name="Gariboldi M."/>
            <person name="Georgii-Hemming P."/>
            <person name="Gingeras T.R."/>
            <person name="Gojobori T."/>
            <person name="Green R.E."/>
            <person name="Gustincich S."/>
            <person name="Harbers M."/>
            <person name="Hayashi Y."/>
            <person name="Hensch T.K."/>
            <person name="Hirokawa N."/>
            <person name="Hill D."/>
            <person name="Huminiecki L."/>
            <person name="Iacono M."/>
            <person name="Ikeo K."/>
            <person name="Iwama A."/>
            <person name="Ishikawa T."/>
            <person name="Jakt M."/>
            <person name="Kanapin A."/>
            <person name="Katoh M."/>
            <person name="Kawasawa Y."/>
            <person name="Kelso J."/>
            <person name="Kitamura H."/>
            <person name="Kitano H."/>
            <person name="Kollias G."/>
            <person name="Krishnan S.P."/>
            <person name="Kruger A."/>
            <person name="Kummerfeld S.K."/>
            <person name="Kurochkin I.V."/>
            <person name="Lareau L.F."/>
            <person name="Lazarevic D."/>
            <person name="Lipovich L."/>
            <person name="Liu J."/>
            <person name="Liuni S."/>
            <person name="McWilliam S."/>
            <person name="Madan Babu M."/>
            <person name="Madera M."/>
            <person name="Marchionni L."/>
            <person name="Matsuda H."/>
            <person name="Matsuzawa S."/>
            <person name="Miki H."/>
            <person name="Mignone F."/>
            <person name="Miyake S."/>
            <person name="Morris K."/>
            <person name="Mottagui-Tabar S."/>
            <person name="Mulder N."/>
            <person name="Nakano N."/>
            <person name="Nakauchi H."/>
            <person name="Ng P."/>
            <person name="Nilsson R."/>
            <person name="Nishiguchi S."/>
            <person name="Nishikawa S."/>
            <person name="Nori F."/>
            <person name="Ohara O."/>
            <person name="Okazaki Y."/>
            <person name="Orlando V."/>
            <person name="Pang K.C."/>
            <person name="Pavan W.J."/>
            <person name="Pavesi G."/>
            <person name="Pesole G."/>
            <person name="Petrovsky N."/>
            <person name="Piazza S."/>
            <person name="Reed J."/>
            <person name="Reid J.F."/>
            <person name="Ring B.Z."/>
            <person name="Ringwald M."/>
            <person name="Rost B."/>
            <person name="Ruan Y."/>
            <person name="Salzberg S.L."/>
            <person name="Sandelin A."/>
            <person name="Schneider C."/>
            <person name="Schoenbach C."/>
            <person name="Sekiguchi K."/>
            <person name="Semple C.A."/>
            <person name="Seno S."/>
            <person name="Sessa L."/>
            <person name="Sheng Y."/>
            <person name="Shibata Y."/>
            <person name="Shimada H."/>
            <person name="Shimada K."/>
            <person name="Silva D."/>
            <person name="Sinclair B."/>
            <person name="Sperling S."/>
            <person name="Stupka E."/>
            <person name="Sugiura K."/>
            <person name="Sultana R."/>
            <person name="Takenaka Y."/>
            <person name="Taki K."/>
            <person name="Tammoja K."/>
            <person name="Tan S.L."/>
            <person name="Tang S."/>
            <person name="Taylor M.S."/>
            <person name="Tegner J."/>
            <person name="Teichmann S.A."/>
            <person name="Ueda H.R."/>
            <person name="van Nimwegen E."/>
            <person name="Verardo R."/>
            <person name="Wei C.L."/>
            <person name="Yagi K."/>
            <person name="Yamanishi H."/>
            <person name="Zabarovsky E."/>
            <person name="Zhu S."/>
            <person name="Zimmer A."/>
            <person name="Hide W."/>
            <person name="Bult C."/>
            <person name="Grimmond S.M."/>
            <person name="Teasdale R.D."/>
            <person name="Liu E.T."/>
            <person name="Brusic V."/>
            <person name="Quackenbush J."/>
            <person name="Wahlestedt C."/>
            <person name="Mattick J.S."/>
            <person name="Hume D.A."/>
            <person name="Kai C."/>
            <person name="Sasaki D."/>
            <person name="Tomaru Y."/>
            <person name="Fukuda S."/>
            <person name="Kanamori-Katayama M."/>
            <person name="Suzuki M."/>
            <person name="Aoki J."/>
            <person name="Arakawa T."/>
            <person name="Iida J."/>
            <person name="Imamura K."/>
            <person name="Itoh M."/>
            <person name="Kato T."/>
            <person name="Kawaji H."/>
            <person name="Kawagashira N."/>
            <person name="Kawashima T."/>
            <person name="Kojima M."/>
            <person name="Kondo S."/>
            <person name="Konno H."/>
            <person name="Nakano K."/>
            <person name="Ninomiya N."/>
            <person name="Nishio T."/>
            <person name="Okada M."/>
            <person name="Plessy C."/>
            <person name="Shibata K."/>
            <person name="Shiraki T."/>
            <person name="Suzuki S."/>
            <person name="Tagami M."/>
            <person name="Waki K."/>
            <person name="Watahiki A."/>
            <person name="Okamura-Oho Y."/>
            <person name="Suzuki H."/>
            <person name="Kawai J."/>
            <person name="Hayashizaki Y."/>
        </authorList>
    </citation>
    <scope>NUCLEOTIDE SEQUENCE [LARGE SCALE MRNA]</scope>
    <source>
        <strain>C57BL/6J</strain>
        <tissue>Oviduct</tissue>
        <tissue>Thymus</tissue>
    </source>
</reference>
<reference key="3">
    <citation type="journal article" date="2004" name="Genome Res.">
        <title>The status, quality, and expansion of the NIH full-length cDNA project: the Mammalian Gene Collection (MGC).</title>
        <authorList>
            <consortium name="The MGC Project Team"/>
        </authorList>
    </citation>
    <scope>NUCLEOTIDE SEQUENCE [LARGE SCALE MRNA]</scope>
    <source>
        <tissue>Kidney</tissue>
        <tissue>Mammary tumor</tissue>
    </source>
</reference>
<reference key="4">
    <citation type="journal article" date="2004" name="J. Biol. Chem.">
        <title>Identification of snapin and three novel proteins (BLOS1, BLOS2, and BLOS3/reduced pigmentation) as subunits of biogenesis of lysosome-related organelles complex-1 (BLOC-1).</title>
        <authorList>
            <person name="Starcevic M."/>
            <person name="Dell'Angelica E.C."/>
        </authorList>
    </citation>
    <scope>IDENTIFICATION IN THE BLOC-1 COMPLEX</scope>
</reference>
<reference key="5">
    <citation type="journal article" date="2006" name="Mol. Biol. Cell">
        <title>BLOC-1 complex deficiency alters the targeting of adaptor protein complex-3 cargoes.</title>
        <authorList>
            <person name="Salazar G."/>
            <person name="Craige B."/>
            <person name="Styers M.L."/>
            <person name="Newell-Litwa K.A."/>
            <person name="Doucette M.M."/>
            <person name="Wainer B.H."/>
            <person name="Falcon-Perez J.M."/>
            <person name="Dell'Angelica E.C."/>
            <person name="Peden A.A."/>
            <person name="Werner E."/>
            <person name="Faundez V."/>
        </authorList>
    </citation>
    <scope>FUNCTION</scope>
</reference>
<reference key="6">
    <citation type="journal article" date="2007" name="Mol. Biol. Cell">
        <title>BLOC-1 is required for cargo-specific sorting from vacuolar early endosomes toward lysosome-related organelles.</title>
        <authorList>
            <person name="Setty S.R."/>
            <person name="Tenza D."/>
            <person name="Truschel S.T."/>
            <person name="Chou E."/>
            <person name="Sviderskaya E.V."/>
            <person name="Theos A.C."/>
            <person name="Lamoreux M.L."/>
            <person name="Di Pietro S.M."/>
            <person name="Starcevic M."/>
            <person name="Bennett D.C."/>
            <person name="Dell'Angelica E.C."/>
            <person name="Raposo G."/>
            <person name="Marks M.S."/>
        </authorList>
    </citation>
    <scope>IDENTIFICATION IN THE BLOC-1 COMPLEX</scope>
</reference>
<reference key="7">
    <citation type="journal article" date="2010" name="Cell">
        <title>A tissue-specific atlas of mouse protein phosphorylation and expression.</title>
        <authorList>
            <person name="Huttlin E.L."/>
            <person name="Jedrychowski M.P."/>
            <person name="Elias J.E."/>
            <person name="Goswami T."/>
            <person name="Rad R."/>
            <person name="Beausoleil S.A."/>
            <person name="Villen J."/>
            <person name="Haas W."/>
            <person name="Sowa M.E."/>
            <person name="Gygi S.P."/>
        </authorList>
    </citation>
    <scope>PHOSPHORYLATION [LARGE SCALE ANALYSIS] AT THR-59 AND SER-61</scope>
    <scope>IDENTIFICATION BY MASS SPECTROMETRY [LARGE SCALE ANALYSIS]</scope>
    <source>
        <tissue>Brown adipose tissue</tissue>
        <tissue>Kidney</tissue>
        <tissue>Spleen</tissue>
        <tissue>Testis</tissue>
    </source>
</reference>
<reference key="8">
    <citation type="journal article" date="2010" name="Mol. Psychiatry">
        <title>The dysbindin-containing complex (BLOC-1) in brain: developmental regulation, interaction with SNARE proteins and role in neurite outgrowth.</title>
        <authorList>
            <person name="Ghiani C.A."/>
            <person name="Starcevic M."/>
            <person name="Rodriguez-Fernandez I.A."/>
            <person name="Nazarian R."/>
            <person name="Cheli V.T."/>
            <person name="Chan L.N."/>
            <person name="Malvar J.S."/>
            <person name="de Vellis J."/>
            <person name="Sabatti C."/>
            <person name="Dell'Angelica E.C."/>
        </authorList>
    </citation>
    <scope>FUNCTION</scope>
</reference>
<reference key="9">
    <citation type="journal article" date="2011" name="Mol. Biol. Cell">
        <title>The schizophrenia susceptibility factor dysbindin and its associated complex sort cargoes from cell bodies to the synapse.</title>
        <authorList>
            <person name="Larimore J."/>
            <person name="Tornieri K."/>
            <person name="Ryder P.V."/>
            <person name="Gokhale A."/>
            <person name="Zlatic S.A."/>
            <person name="Craige B."/>
            <person name="Lee J.D."/>
            <person name="Talbot K."/>
            <person name="Pare J.F."/>
            <person name="Smith Y."/>
            <person name="Faundez V."/>
        </authorList>
    </citation>
    <scope>FUNCTION</scope>
    <scope>ASSOCIATION WITH THE AP-3 COMPLEX</scope>
</reference>
<keyword id="KW-0015">Albinism</keyword>
<keyword id="KW-0963">Cytoplasm</keyword>
<keyword id="KW-0363">Hermansky-Pudlak syndrome</keyword>
<keyword id="KW-0597">Phosphoprotein</keyword>
<keyword id="KW-1185">Reference proteome</keyword>
<name>BL1S3_MOUSE</name>
<feature type="chain" id="PRO_0000234549" description="Biogenesis of lysosome-related organelles complex 1 subunit 3">
    <location>
        <begin position="1"/>
        <end position="195"/>
    </location>
</feature>
<feature type="region of interest" description="Disordered" evidence="2">
    <location>
        <begin position="1"/>
        <end position="72"/>
    </location>
</feature>
<feature type="compositionally biased region" description="Basic residues" evidence="2">
    <location>
        <begin position="1"/>
        <end position="11"/>
    </location>
</feature>
<feature type="compositionally biased region" description="Low complexity" evidence="2">
    <location>
        <begin position="25"/>
        <end position="51"/>
    </location>
</feature>
<feature type="modified residue" description="Phosphothreonine" evidence="10">
    <location>
        <position position="59"/>
    </location>
</feature>
<feature type="modified residue" description="Phosphoserine" evidence="10">
    <location>
        <position position="61"/>
    </location>
</feature>
<dbReference type="EMBL" id="AY515509">
    <property type="protein sequence ID" value="AAS83987.1"/>
    <property type="molecule type" value="Genomic_DNA"/>
</dbReference>
<dbReference type="EMBL" id="BK005392">
    <property type="protein sequence ID" value="DAA05717.1"/>
    <property type="molecule type" value="mRNA"/>
</dbReference>
<dbReference type="EMBL" id="AK054006">
    <property type="protein sequence ID" value="BAC35618.1"/>
    <property type="molecule type" value="mRNA"/>
</dbReference>
<dbReference type="EMBL" id="AK153811">
    <property type="protein sequence ID" value="BAE32192.1"/>
    <property type="molecule type" value="mRNA"/>
</dbReference>
<dbReference type="EMBL" id="BC025913">
    <property type="protein sequence ID" value="AAH25913.1"/>
    <property type="molecule type" value="mRNA"/>
</dbReference>
<dbReference type="EMBL" id="BC043666">
    <property type="protein sequence ID" value="AAH43666.1"/>
    <property type="molecule type" value="mRNA"/>
</dbReference>
<dbReference type="CCDS" id="CCDS20904.1"/>
<dbReference type="RefSeq" id="NP_001408666.1">
    <property type="nucleotide sequence ID" value="NM_001421737.1"/>
</dbReference>
<dbReference type="RefSeq" id="NP_808360.2">
    <property type="nucleotide sequence ID" value="NM_177692.4"/>
</dbReference>
<dbReference type="RefSeq" id="XP_006539894.1">
    <property type="nucleotide sequence ID" value="XM_006539831.5"/>
</dbReference>
<dbReference type="RefSeq" id="XP_006539895.1">
    <property type="nucleotide sequence ID" value="XM_006539832.3"/>
</dbReference>
<dbReference type="SMR" id="Q5U5M8"/>
<dbReference type="BioGRID" id="231329">
    <property type="interactions" value="4"/>
</dbReference>
<dbReference type="ComplexPortal" id="CPX-1913">
    <property type="entry name" value="BLOC-1 complex"/>
</dbReference>
<dbReference type="CORUM" id="Q5U5M8"/>
<dbReference type="FunCoup" id="Q5U5M8">
    <property type="interactions" value="849"/>
</dbReference>
<dbReference type="STRING" id="10090.ENSMUSP00000076624"/>
<dbReference type="GlyGen" id="Q5U5M8">
    <property type="glycosylation" value="1 site"/>
</dbReference>
<dbReference type="iPTMnet" id="Q5U5M8"/>
<dbReference type="PhosphoSitePlus" id="Q5U5M8"/>
<dbReference type="jPOST" id="Q5U5M8"/>
<dbReference type="PaxDb" id="10090-ENSMUSP00000076624"/>
<dbReference type="PeptideAtlas" id="Q5U5M8"/>
<dbReference type="ProteomicsDB" id="273745"/>
<dbReference type="Pumba" id="Q5U5M8"/>
<dbReference type="Antibodypedia" id="59249">
    <property type="antibodies" value="81 antibodies from 15 providers"/>
</dbReference>
<dbReference type="DNASU" id="232946"/>
<dbReference type="Ensembl" id="ENSMUST00000077408.8">
    <property type="protein sequence ID" value="ENSMUSP00000076624.7"/>
    <property type="gene ID" value="ENSMUSG00000057667.8"/>
</dbReference>
<dbReference type="GeneID" id="232946"/>
<dbReference type="KEGG" id="mmu:232946"/>
<dbReference type="UCSC" id="uc009fma.1">
    <property type="organism name" value="mouse"/>
</dbReference>
<dbReference type="AGR" id="MGI:2678952"/>
<dbReference type="CTD" id="388552"/>
<dbReference type="MGI" id="MGI:2678952">
    <property type="gene designation" value="Bloc1s3"/>
</dbReference>
<dbReference type="VEuPathDB" id="HostDB:ENSMUSG00000057667"/>
<dbReference type="eggNOG" id="ENOG502RZCG">
    <property type="taxonomic scope" value="Eukaryota"/>
</dbReference>
<dbReference type="GeneTree" id="ENSGT00390000008756"/>
<dbReference type="HOGENOM" id="CLU_116012_0_0_1"/>
<dbReference type="InParanoid" id="Q5U5M8"/>
<dbReference type="OMA" id="RDHPDMH"/>
<dbReference type="OrthoDB" id="5984572at2759"/>
<dbReference type="PhylomeDB" id="Q5U5M8"/>
<dbReference type="TreeFam" id="TF336303"/>
<dbReference type="Reactome" id="R-MMU-432722">
    <property type="pathway name" value="Golgi Associated Vesicle Biogenesis"/>
</dbReference>
<dbReference type="BioGRID-ORCS" id="232946">
    <property type="hits" value="12 hits in 79 CRISPR screens"/>
</dbReference>
<dbReference type="ChiTaRS" id="Bloc1s3">
    <property type="organism name" value="mouse"/>
</dbReference>
<dbReference type="PRO" id="PR:Q5U5M8"/>
<dbReference type="Proteomes" id="UP000000589">
    <property type="component" value="Chromosome 7"/>
</dbReference>
<dbReference type="RNAct" id="Q5U5M8">
    <property type="molecule type" value="protein"/>
</dbReference>
<dbReference type="Bgee" id="ENSMUSG00000057667">
    <property type="expression patterns" value="Expressed in granulocyte and 226 other cell types or tissues"/>
</dbReference>
<dbReference type="GO" id="GO:1904115">
    <property type="term" value="C:axon cytoplasm"/>
    <property type="evidence" value="ECO:0007669"/>
    <property type="project" value="GOC"/>
</dbReference>
<dbReference type="GO" id="GO:0031083">
    <property type="term" value="C:BLOC-1 complex"/>
    <property type="evidence" value="ECO:0000314"/>
    <property type="project" value="UniProtKB"/>
</dbReference>
<dbReference type="GO" id="GO:0005737">
    <property type="term" value="C:cytoplasm"/>
    <property type="evidence" value="ECO:0000314"/>
    <property type="project" value="MGI"/>
</dbReference>
<dbReference type="GO" id="GO:0005829">
    <property type="term" value="C:cytosol"/>
    <property type="evidence" value="ECO:0000314"/>
    <property type="project" value="MGI"/>
</dbReference>
<dbReference type="GO" id="GO:0030133">
    <property type="term" value="C:transport vesicle"/>
    <property type="evidence" value="ECO:0000250"/>
    <property type="project" value="UniProtKB"/>
</dbReference>
<dbReference type="GO" id="GO:0008320">
    <property type="term" value="F:protein transmembrane transporter activity"/>
    <property type="evidence" value="ECO:0000315"/>
    <property type="project" value="CACAO"/>
</dbReference>
<dbReference type="GO" id="GO:0008089">
    <property type="term" value="P:anterograde axonal transport"/>
    <property type="evidence" value="ECO:0000315"/>
    <property type="project" value="UniProtKB"/>
</dbReference>
<dbReference type="GO" id="GO:0048490">
    <property type="term" value="P:anterograde synaptic vesicle transport"/>
    <property type="evidence" value="ECO:0000315"/>
    <property type="project" value="UniProtKB"/>
</dbReference>
<dbReference type="GO" id="GO:0007596">
    <property type="term" value="P:blood coagulation"/>
    <property type="evidence" value="ECO:0000315"/>
    <property type="project" value="MGI"/>
</dbReference>
<dbReference type="GO" id="GO:0048066">
    <property type="term" value="P:developmental pigmentation"/>
    <property type="evidence" value="ECO:0000315"/>
    <property type="project" value="MGI"/>
</dbReference>
<dbReference type="GO" id="GO:0035646">
    <property type="term" value="P:endosome to melanosome transport"/>
    <property type="evidence" value="ECO:0000250"/>
    <property type="project" value="UniProtKB"/>
</dbReference>
<dbReference type="GO" id="GO:0001654">
    <property type="term" value="P:eye development"/>
    <property type="evidence" value="ECO:0007669"/>
    <property type="project" value="Ensembl"/>
</dbReference>
<dbReference type="GO" id="GO:0032438">
    <property type="term" value="P:melanosome organization"/>
    <property type="evidence" value="ECO:0000315"/>
    <property type="project" value="MGI"/>
</dbReference>
<dbReference type="GO" id="GO:0032402">
    <property type="term" value="P:melanosome transport"/>
    <property type="evidence" value="ECO:0000250"/>
    <property type="project" value="UniProtKB"/>
</dbReference>
<dbReference type="GO" id="GO:0031175">
    <property type="term" value="P:neuron projection development"/>
    <property type="evidence" value="ECO:0000303"/>
    <property type="project" value="UniProtKB"/>
</dbReference>
<dbReference type="GO" id="GO:0043473">
    <property type="term" value="P:pigmentation"/>
    <property type="evidence" value="ECO:0000315"/>
    <property type="project" value="MGI"/>
</dbReference>
<dbReference type="GO" id="GO:0030168">
    <property type="term" value="P:platelet activation"/>
    <property type="evidence" value="ECO:0007669"/>
    <property type="project" value="Ensembl"/>
</dbReference>
<dbReference type="GO" id="GO:0060155">
    <property type="term" value="P:platelet dense granule organization"/>
    <property type="evidence" value="ECO:0000315"/>
    <property type="project" value="MGI"/>
</dbReference>
<dbReference type="GO" id="GO:0032816">
    <property type="term" value="P:positive regulation of natural killer cell activation"/>
    <property type="evidence" value="ECO:0000315"/>
    <property type="project" value="MGI"/>
</dbReference>
<dbReference type="GO" id="GO:0009410">
    <property type="term" value="P:response to xenobiotic stimulus"/>
    <property type="evidence" value="ECO:0000315"/>
    <property type="project" value="MGI"/>
</dbReference>
<dbReference type="GO" id="GO:0033299">
    <property type="term" value="P:secretion of lysosomal enzymes"/>
    <property type="evidence" value="ECO:0000315"/>
    <property type="project" value="MGI"/>
</dbReference>
<dbReference type="InterPro" id="IPR017245">
    <property type="entry name" value="BLOC-1_complex_su-3"/>
</dbReference>
<dbReference type="PANTHER" id="PTHR31974">
    <property type="entry name" value="BIOGENESIS OF LYSOSOME-RELATED ORGANELLES COMPLEX 1 SUBUNIT 3"/>
    <property type="match status" value="1"/>
</dbReference>
<dbReference type="PANTHER" id="PTHR31974:SF2">
    <property type="entry name" value="BIOGENESIS OF LYSOSOME-RELATED ORGANELLES COMPLEX 1 SUBUNIT 3"/>
    <property type="match status" value="1"/>
</dbReference>
<dbReference type="Pfam" id="PF15753">
    <property type="entry name" value="BLOC1S3"/>
    <property type="match status" value="1"/>
</dbReference>
<dbReference type="PIRSF" id="PIRSF037630">
    <property type="entry name" value="BLOC-1_complex_subunit_3"/>
    <property type="match status" value="1"/>
</dbReference>
<evidence type="ECO:0000250" key="1"/>
<evidence type="ECO:0000256" key="2">
    <source>
        <dbReference type="SAM" id="MobiDB-lite"/>
    </source>
</evidence>
<evidence type="ECO:0000269" key="3">
    <source>
    </source>
</evidence>
<evidence type="ECO:0000269" key="4">
    <source>
    </source>
</evidence>
<evidence type="ECO:0000269" key="5">
    <source>
    </source>
</evidence>
<evidence type="ECO:0000269" key="6">
    <source>
    </source>
</evidence>
<evidence type="ECO:0000269" key="7">
    <source>
    </source>
</evidence>
<evidence type="ECO:0000269" key="8">
    <source>
    </source>
</evidence>
<evidence type="ECO:0000305" key="9"/>
<evidence type="ECO:0007744" key="10">
    <source>
    </source>
</evidence>
<protein>
    <recommendedName>
        <fullName>Biogenesis of lysosome-related organelles complex 1 subunit 3</fullName>
        <shortName>BLOC-1 subunit 3</shortName>
    </recommendedName>
    <alternativeName>
        <fullName>Reduced pigmentation protein</fullName>
    </alternativeName>
</protein>
<organism>
    <name type="scientific">Mus musculus</name>
    <name type="common">Mouse</name>
    <dbReference type="NCBI Taxonomy" id="10090"/>
    <lineage>
        <taxon>Eukaryota</taxon>
        <taxon>Metazoa</taxon>
        <taxon>Chordata</taxon>
        <taxon>Craniata</taxon>
        <taxon>Vertebrata</taxon>
        <taxon>Euteleostomi</taxon>
        <taxon>Mammalia</taxon>
        <taxon>Eutheria</taxon>
        <taxon>Euarchontoglires</taxon>
        <taxon>Glires</taxon>
        <taxon>Rodentia</taxon>
        <taxon>Myomorpha</taxon>
        <taxon>Muroidea</taxon>
        <taxon>Muridae</taxon>
        <taxon>Murinae</taxon>
        <taxon>Mus</taxon>
        <taxon>Mus</taxon>
    </lineage>
</organism>
<sequence>MESSQGRRRRPGTVVPGEAAETDSELSASSSEEELYLGPSGPTRGRPTGLRVAGEAAETDSEPEPEPTVVPVDLPPLVVQRDPAETWGTEETPAMAPARSLLQLRLAESQTRLDHDVAAAVSGVYRRAGRDVAALAGRLAAAQATGLAAAHSVRLARGDLCALAERLDIVAGCRLLPDIRGVPGMEPEQDPGPRA</sequence>
<gene>
    <name type="primary">Bloc1s3</name>
    <name type="synonym">Blos3</name>
    <name type="synonym">Rp</name>
</gene>